<dbReference type="EC" id="2.7.10.1"/>
<dbReference type="EMBL" id="L35039">
    <property type="protein sequence ID" value="AAA62227.1"/>
    <property type="molecule type" value="Genomic_DNA"/>
</dbReference>
<dbReference type="PIR" id="I55609">
    <property type="entry name" value="I55609"/>
</dbReference>
<dbReference type="SMR" id="Q28516"/>
<dbReference type="STRING" id="9544.ENSMMUP00000045695"/>
<dbReference type="GlyCosmos" id="Q28516">
    <property type="glycosylation" value="5 sites, No reported glycans"/>
</dbReference>
<dbReference type="PaxDb" id="9544-ENSMMUP00000004959"/>
<dbReference type="eggNOG" id="KOG4258">
    <property type="taxonomic scope" value="Eukaryota"/>
</dbReference>
<dbReference type="HOGENOM" id="CLU_000288_166_0_1"/>
<dbReference type="InParanoid" id="Q28516"/>
<dbReference type="Proteomes" id="UP000006718">
    <property type="component" value="Unassembled WGS sequence"/>
</dbReference>
<dbReference type="GO" id="GO:0005770">
    <property type="term" value="C:late endosome"/>
    <property type="evidence" value="ECO:0007669"/>
    <property type="project" value="UniProtKB-SubCell"/>
</dbReference>
<dbReference type="GO" id="GO:0005764">
    <property type="term" value="C:lysosome"/>
    <property type="evidence" value="ECO:0007669"/>
    <property type="project" value="UniProtKB-SubCell"/>
</dbReference>
<dbReference type="GO" id="GO:0005886">
    <property type="term" value="C:plasma membrane"/>
    <property type="evidence" value="ECO:0007669"/>
    <property type="project" value="UniProtKB-SubCell"/>
</dbReference>
<dbReference type="GO" id="GO:0005524">
    <property type="term" value="F:ATP binding"/>
    <property type="evidence" value="ECO:0007669"/>
    <property type="project" value="UniProtKB-KW"/>
</dbReference>
<dbReference type="GO" id="GO:0043559">
    <property type="term" value="F:insulin binding"/>
    <property type="evidence" value="ECO:0000250"/>
    <property type="project" value="UniProtKB"/>
</dbReference>
<dbReference type="GO" id="GO:0005009">
    <property type="term" value="F:insulin receptor activity"/>
    <property type="evidence" value="ECO:0000250"/>
    <property type="project" value="UniProtKB"/>
</dbReference>
<dbReference type="GO" id="GO:0043560">
    <property type="term" value="F:insulin receptor substrate binding"/>
    <property type="evidence" value="ECO:0000250"/>
    <property type="project" value="UniProtKB"/>
</dbReference>
<dbReference type="GO" id="GO:0043548">
    <property type="term" value="F:phosphatidylinositol 3-kinase binding"/>
    <property type="evidence" value="ECO:0000250"/>
    <property type="project" value="UniProtKB"/>
</dbReference>
<dbReference type="GO" id="GO:0008286">
    <property type="term" value="P:insulin receptor signaling pathway"/>
    <property type="evidence" value="ECO:0000250"/>
    <property type="project" value="UniProtKB"/>
</dbReference>
<dbReference type="GO" id="GO:0046777">
    <property type="term" value="P:protein autophosphorylation"/>
    <property type="evidence" value="ECO:0000250"/>
    <property type="project" value="UniProtKB"/>
</dbReference>
<dbReference type="CDD" id="cd00063">
    <property type="entry name" value="FN3"/>
    <property type="match status" value="1"/>
</dbReference>
<dbReference type="FunFam" id="2.60.40.10:FF:001010">
    <property type="entry name" value="Tyrosine-protein kinase receptor"/>
    <property type="match status" value="1"/>
</dbReference>
<dbReference type="Gene3D" id="2.60.40.10">
    <property type="entry name" value="Immunoglobulins"/>
    <property type="match status" value="2"/>
</dbReference>
<dbReference type="InterPro" id="IPR003961">
    <property type="entry name" value="FN3_dom"/>
</dbReference>
<dbReference type="InterPro" id="IPR036116">
    <property type="entry name" value="FN3_sf"/>
</dbReference>
<dbReference type="InterPro" id="IPR013783">
    <property type="entry name" value="Ig-like_fold"/>
</dbReference>
<dbReference type="SUPFAM" id="SSF49265">
    <property type="entry name" value="Fibronectin type III"/>
    <property type="match status" value="1"/>
</dbReference>
<dbReference type="PROSITE" id="PS50853">
    <property type="entry name" value="FN3"/>
    <property type="match status" value="1"/>
</dbReference>
<keyword id="KW-0067">ATP-binding</keyword>
<keyword id="KW-1003">Cell membrane</keyword>
<keyword id="KW-0165">Cleavage on pair of basic residues</keyword>
<keyword id="KW-1015">Disulfide bond</keyword>
<keyword id="KW-0967">Endosome</keyword>
<keyword id="KW-0325">Glycoprotein</keyword>
<keyword id="KW-0418">Kinase</keyword>
<keyword id="KW-0458">Lysosome</keyword>
<keyword id="KW-0472">Membrane</keyword>
<keyword id="KW-0547">Nucleotide-binding</keyword>
<keyword id="KW-0675">Receptor</keyword>
<keyword id="KW-1185">Reference proteome</keyword>
<keyword id="KW-0677">Repeat</keyword>
<keyword id="KW-0702">S-nitrosylation</keyword>
<keyword id="KW-0808">Transferase</keyword>
<keyword id="KW-0829">Tyrosine-protein kinase</keyword>
<gene>
    <name type="primary">INSR</name>
</gene>
<proteinExistence type="inferred from homology"/>
<protein>
    <recommendedName>
        <fullName>Insulin receptor</fullName>
        <shortName>IR</shortName>
        <ecNumber>2.7.10.1</ecNumber>
    </recommendedName>
    <cdAntigenName>CD220</cdAntigenName>
    <component>
        <recommendedName>
            <fullName>Insulin receptor subunit alpha</fullName>
        </recommendedName>
    </component>
    <component>
        <recommendedName>
            <fullName>Insulin receptor subunit beta</fullName>
        </recommendedName>
    </component>
</protein>
<comment type="function">
    <text evidence="1 4">Receptor tyrosine kinase which mediates the pleiotropic actions of insulin. Binding of insulin leads to phosphorylation of several intracellular substrates, including, insulin receptor substrates (IRS1, 2, 3, 4), SHC, GAB1, CBL and other signaling intermediates. Each of these phosphorylated proteins serve as docking proteins for other signaling proteins that contain Src-homology-2 domains (SH2 domain) that specifically recognize different phosphotyrosine residues, including the p85 regulatory subunit of PI3K and SHP2. Phosphorylation of IRSs proteins lead to the activation of two main signaling pathways: the PI3K-AKT/PKB pathway, which is responsible for most of the metabolic actions of insulin, and the Ras-MAPK pathway, which regulates expression of some genes and cooperates with the PI3K pathway to control cell growth and differentiation. Binding of the SH2 domains of PI3K to phosphotyrosines on IRS1 leads to the activation of PI3K and the generation of phosphatidylinositol-(3, 4, 5)-triphosphate (PIP3), a lipid second messenger, which activates several PIP3-dependent serine/threonine kinases, such as PDPK1 and subsequently AKT/PKB. The net effect of this pathway is to produce a translocation of the glucose transporter SLC2A4/GLUT4 from cytoplasmic vesicles to the cell membrane to facilitate glucose transport. Moreover, upon insulin stimulation, activated AKT/PKB is responsible for: anti-apoptotic effect of insulin by inducing phosphorylation of BAD; regulates the expression of gluconeogenic and lipogenic enzymes by controlling the activity of the winged helix or forkhead (FOX) class of transcription factors. Another pathway regulated by PI3K-AKT/PKB activation is mTORC1 signaling pathway which regulates cell growth and metabolism and integrates signals from insulin. AKT mediates insulin-stimulated protein synthesis by phosphorylating TSC2 thereby activating mTORC1 pathway. The Ras/RAF/MAP2K/MAPK pathway is mainly involved in mediating cell growth, survival and cellular differentiation of insulin. Phosphorylated IRS1 recruits GRB2/SOS complex, which triggers the activation of the Ras/RAF/MAP2K/MAPK pathway. In addition to binding insulin, the insulin receptor can bind insulin-like growth factors (IGFI and IGFII). When present in a hybrid receptor with IGF1R, binds IGF1 (By similarity). In adipocytes, inhibits lipolysis (By similarity).</text>
</comment>
<comment type="catalytic activity">
    <reaction evidence="8">
        <text>L-tyrosyl-[protein] + ATP = O-phospho-L-tyrosyl-[protein] + ADP + H(+)</text>
        <dbReference type="Rhea" id="RHEA:10596"/>
        <dbReference type="Rhea" id="RHEA-COMP:10136"/>
        <dbReference type="Rhea" id="RHEA-COMP:20101"/>
        <dbReference type="ChEBI" id="CHEBI:15378"/>
        <dbReference type="ChEBI" id="CHEBI:30616"/>
        <dbReference type="ChEBI" id="CHEBI:46858"/>
        <dbReference type="ChEBI" id="CHEBI:61978"/>
        <dbReference type="ChEBI" id="CHEBI:456216"/>
        <dbReference type="EC" id="2.7.10.1"/>
    </reaction>
</comment>
<comment type="activity regulation">
    <text evidence="1">Activated in response to insulin. Autophosphorylation activates the kinase activity. PTPN1, PTPRE and PTPRF dephosphorylate important tyrosine residues, thereby reducing INSR activity. Inhibited by ENPP1. GRB10 and GRB14 inhibit the catalytic activity of the INSR, they block access of substrates to the activated receptor. SOCS1 and SOCS3 act as negative regulators of INSR activity, they bind to the activated INRS and interfere with the phosphorylation of INSR substrates (By similarity).</text>
</comment>
<comment type="subunit">
    <text evidence="1 2 3 4">Tetramer of 2 alpha and 2 beta chains linked by disulfide bonds. The alpha chains carry the insulin-binding regions, while the beta chains carry the kinase domain. Forms a hybrid receptor with IGF1R, the hybrid is a tetramer consisting of 1 alpha chain and 1 beta chain of INSR and 1 alpha chain and 1 beta chain of IGF1R (By similarity). Interacts with SORBS1 but dissociates from it following insulin stimulation (By similarity). Binds SH2B2 (By similarity). Activated form of INSR interacts (via phosphorylated Tyrosine) with the PTB/PID domains of IRS1 and SHC1 (By similarity). The sequences surrounding the phosphorylated NPXY motif contribute differentially to either IRS1 or SHC1 recognition (By similarity). Interacts (via tyrosines in the C-terminus) with IRS2 (via PTB domain and 591-786 AA); the 591-786 would be the primary anchor of IRS2 to INSR while the PTB domain would have a stabilizing action on the interaction with INSR (By similarity). Interacts with the SH2 domains of the 85 kDa regulatory subunit of PI3K (PIK3R1) in vitro, when autophosphorylated on tyrosine residues (By similarity). Interacts with SOCS7. Interacts with SOCS3 (By similarity). Interacts with SOCS1 (By similarity). Interacts with CAV2 (tyrosine-phosphorylated form); the interaction is increased with 'Tyr-27'phosphorylation of CAV2 (By similarity). Interacts with ARRB2 (By similarity). Interacts with GRB10; this interaction blocks the association between IRS1/IRS2 and INSR, significantly reduces insulin-stimulated tyrosine phosphorylation of IRS1 and IRS2 and thus decreases insulin signaling (By similarity). Interacts with GRB7 (By similarity). Interacts with PDPK1 (By similarity). Interacts with GRB14 (via BPS domain) (By similarity). Interacts (via subunit alpha) with ENPP1 (via 485-599 AA); this interaction blocks autophosphorylation (By similarity). Interacts with PTPRE (By similarity). Interacts with STAT5B (via SH2 domain) (By similarity). Interacts with PTPRF (By similarity). Interacts with ATIC; ATIC together with PRKAA2/AMPK2 and HACD3/PTPLAD1 is proposed to be part of a signaling netwok regulating INSR autophosphorylation and endocytosis (By similarity). Interacts with the insulin receptor SORL1; this interaction strongly increases its surface exposure, hence strengthens insulin signal reception (By similarity). Interacts (tyrosine phosphorylated) with CCDC88A/GIV (via SH2-like region); binding requires autophosphorylation of the INSR C-terminal region (By similarity). Interacts with GNAI3; the interaction is probably mediated by CCDC88A/GIV (By similarity). Interacts with LMBRD1 (By similarity). Interacts (in response to insulin stimulation) with NCK1; this interaction may recruit PTPN1 to mediate INSR dephosphorylation (By similarity).</text>
</comment>
<comment type="subcellular location">
    <subcellularLocation>
        <location evidence="4">Cell membrane</location>
        <topology evidence="10">Single-pass type I membrane protein</topology>
    </subcellularLocation>
    <subcellularLocation>
        <location evidence="4">Late endosome</location>
    </subcellularLocation>
    <subcellularLocation>
        <location evidence="4">Lysosome</location>
    </subcellularLocation>
    <text evidence="4">Binding of insulin to INSR induces internalization and lysosomal degradation of the receptor, a means for down-regulating this signaling pathway after stimulation. In the presence of SORL1, internalized INSR molecules are redirected back to the cell surface, thereby preventing their lysosomal catabolism and strengthening insulin signal reception.</text>
</comment>
<comment type="domain">
    <text evidence="1">The tetrameric insulin receptor binds insulin via non-identical regions from two alpha chains, primarily via the C-terminal region of the first INSR alpha chain.</text>
</comment>
<comment type="PTM">
    <text evidence="2">After being transported from the endoplasmic reticulum to the Golgi apparatus, the single glycosylated precursor is further glycosylated and then cleaved, followed by its transport to the plasma membrane.</text>
</comment>
<comment type="PTM">
    <text evidence="2">Autophosphorylated on tyrosine residues in response to insulin. Dephosphorylated by PTPN1, PTPRE and PTPRF. Dephosphorylated by PTPN2; down-regulates insulin-induced signaling.</text>
</comment>
<comment type="PTM">
    <text evidence="2">S-nitrosylation by BLVRB inhibits the receptor tyrosine kinase, thereby inhibiting insulin signaling.</text>
</comment>
<comment type="similarity">
    <text evidence="6">Belongs to the protein kinase superfamily. Tyr protein kinase family. Insulin receptor subfamily.</text>
</comment>
<name>INSR_MACMU</name>
<sequence length="210" mass="23607">VSNSSSQIILKWKPPSDPNGNITHYLVFWERQAEDSELFELDYCLKGLKLPSRTWSPPFESEDSQKHNQSEYEDSAGECCSCPKTDSQILKELEESSFRKTFEDYLHNVVFVPRKTSSGTGAEDPRPSRKRRSLGDVGNVTVAVPTVAAFPNTSSTSTPTSPEEHRPFEKVVNKESLVISGLRHFTGYRIELQACNQDTPEERCSVAAYV</sequence>
<accession>Q28516</accession>
<organism>
    <name type="scientific">Macaca mulatta</name>
    <name type="common">Rhesus macaque</name>
    <dbReference type="NCBI Taxonomy" id="9544"/>
    <lineage>
        <taxon>Eukaryota</taxon>
        <taxon>Metazoa</taxon>
        <taxon>Chordata</taxon>
        <taxon>Craniata</taxon>
        <taxon>Vertebrata</taxon>
        <taxon>Euteleostomi</taxon>
        <taxon>Mammalia</taxon>
        <taxon>Eutheria</taxon>
        <taxon>Euarchontoglires</taxon>
        <taxon>Primates</taxon>
        <taxon>Haplorrhini</taxon>
        <taxon>Catarrhini</taxon>
        <taxon>Cercopithecidae</taxon>
        <taxon>Cercopithecinae</taxon>
        <taxon>Macaca</taxon>
    </lineage>
</organism>
<evidence type="ECO:0000250" key="1"/>
<evidence type="ECO:0000250" key="2">
    <source>
        <dbReference type="UniProtKB" id="P06213"/>
    </source>
</evidence>
<evidence type="ECO:0000250" key="3">
    <source>
        <dbReference type="UniProtKB" id="P15127"/>
    </source>
</evidence>
<evidence type="ECO:0000250" key="4">
    <source>
        <dbReference type="UniProtKB" id="P15208"/>
    </source>
</evidence>
<evidence type="ECO:0000255" key="5"/>
<evidence type="ECO:0000255" key="6">
    <source>
        <dbReference type="PROSITE-ProRule" id="PRU00159"/>
    </source>
</evidence>
<evidence type="ECO:0000255" key="7">
    <source>
        <dbReference type="PROSITE-ProRule" id="PRU00316"/>
    </source>
</evidence>
<evidence type="ECO:0000255" key="8">
    <source>
        <dbReference type="PROSITE-ProRule" id="PRU10028"/>
    </source>
</evidence>
<evidence type="ECO:0000256" key="9">
    <source>
        <dbReference type="SAM" id="MobiDB-lite"/>
    </source>
</evidence>
<evidence type="ECO:0000305" key="10"/>
<feature type="chain" id="PRO_0000016690" description="Insulin receptor subunit alpha">
    <location>
        <begin position="1" status="less than"/>
        <end position="128"/>
    </location>
</feature>
<feature type="chain" id="PRO_0000016692" description="Insulin receptor subunit beta">
    <location>
        <begin position="133"/>
        <end position="210" status="greater than"/>
    </location>
</feature>
<feature type="topological domain" description="Extracellular" evidence="5">
    <location>
        <begin position="133"/>
        <end position="210" status="greater than"/>
    </location>
</feature>
<feature type="domain" description="Fibronectin type-III" evidence="7">
    <location>
        <begin position="1" status="less than"/>
        <end position="96"/>
    </location>
</feature>
<feature type="region of interest" description="Disordered" evidence="9">
    <location>
        <begin position="55"/>
        <end position="78"/>
    </location>
</feature>
<feature type="region of interest" description="Insulin-binding" evidence="1">
    <location>
        <begin position="103"/>
        <end position="111"/>
    </location>
</feature>
<feature type="region of interest" description="Disordered" evidence="9">
    <location>
        <begin position="116"/>
        <end position="169"/>
    </location>
</feature>
<feature type="compositionally biased region" description="Low complexity" evidence="9">
    <location>
        <begin position="137"/>
        <end position="161"/>
    </location>
</feature>
<feature type="glycosylation site" description="N-linked (GlcNAc...) asparagine" evidence="5">
    <location>
        <position position="3"/>
    </location>
</feature>
<feature type="glycosylation site" description="N-linked (GlcNAc...) asparagine" evidence="5">
    <location>
        <position position="21"/>
    </location>
</feature>
<feature type="glycosylation site" description="N-linked (GlcNAc...) asparagine" evidence="5">
    <location>
        <position position="68"/>
    </location>
</feature>
<feature type="glycosylation site" description="N-linked (GlcNAc...) asparagine" evidence="5">
    <location>
        <position position="139"/>
    </location>
</feature>
<feature type="glycosylation site" description="N-linked (GlcNAc...) asparagine" evidence="5">
    <location>
        <position position="152"/>
    </location>
</feature>
<feature type="disulfide bond" evidence="1">
    <location>
        <begin position="195"/>
        <end position="204"/>
    </location>
</feature>
<feature type="non-terminal residue">
    <location>
        <position position="1"/>
    </location>
</feature>
<feature type="non-terminal residue">
    <location>
        <position position="210"/>
    </location>
</feature>
<reference key="1">
    <citation type="journal article" date="1994" name="J. Clin. Invest.">
        <title>Hyperinsulinemia is associated with altered insulin receptor mRNA splicing in muscle of the spontaneously obese diabetic rhesus monkey.</title>
        <authorList>
            <person name="Huang Z."/>
            <person name="Bodkin N.L."/>
            <person name="Ortmeyer H.K."/>
            <person name="Hansen B.C."/>
            <person name="Shuldiner A.R."/>
        </authorList>
    </citation>
    <scope>NUCLEOTIDE SEQUENCE [GENOMIC DNA]</scope>
    <source>
        <tissue>Liver</tissue>
    </source>
</reference>